<feature type="chain" id="PRO_0000384642" description="Ribosome maturation factor RimP">
    <location>
        <begin position="1"/>
        <end position="153"/>
    </location>
</feature>
<sequence>MAKSTVVEKVTEAVAPIVEEAKLELVDVEYVKEGGNWYLRIFIDKPGGIELDDCQGVSEKIDTLLDEIDPVPQAYFLEVSSPGIERPLKKPQDFEKFNGHLVNITTFAPINGSKNFIGKLLDYNEEGIHLEIKGKQVVLPHQQVATARLAVEI</sequence>
<gene>
    <name evidence="1" type="primary">rimP</name>
    <name type="ordered locus">Dred_1961</name>
</gene>
<dbReference type="EMBL" id="CP000612">
    <property type="protein sequence ID" value="ABO50479.1"/>
    <property type="molecule type" value="Genomic_DNA"/>
</dbReference>
<dbReference type="RefSeq" id="WP_011878289.1">
    <property type="nucleotide sequence ID" value="NC_009253.1"/>
</dbReference>
<dbReference type="SMR" id="A4J5X6"/>
<dbReference type="STRING" id="349161.Dred_1961"/>
<dbReference type="KEGG" id="drm:Dred_1961"/>
<dbReference type="eggNOG" id="COG0779">
    <property type="taxonomic scope" value="Bacteria"/>
</dbReference>
<dbReference type="HOGENOM" id="CLU_070525_2_2_9"/>
<dbReference type="OrthoDB" id="9805006at2"/>
<dbReference type="Proteomes" id="UP000001556">
    <property type="component" value="Chromosome"/>
</dbReference>
<dbReference type="GO" id="GO:0005829">
    <property type="term" value="C:cytosol"/>
    <property type="evidence" value="ECO:0007669"/>
    <property type="project" value="TreeGrafter"/>
</dbReference>
<dbReference type="GO" id="GO:0000028">
    <property type="term" value="P:ribosomal small subunit assembly"/>
    <property type="evidence" value="ECO:0007669"/>
    <property type="project" value="TreeGrafter"/>
</dbReference>
<dbReference type="GO" id="GO:0006412">
    <property type="term" value="P:translation"/>
    <property type="evidence" value="ECO:0007669"/>
    <property type="project" value="TreeGrafter"/>
</dbReference>
<dbReference type="CDD" id="cd01734">
    <property type="entry name" value="YlxS_C"/>
    <property type="match status" value="1"/>
</dbReference>
<dbReference type="FunFam" id="3.30.300.70:FF:000001">
    <property type="entry name" value="Ribosome maturation factor RimP"/>
    <property type="match status" value="1"/>
</dbReference>
<dbReference type="Gene3D" id="2.30.30.180">
    <property type="entry name" value="Ribosome maturation factor RimP, C-terminal domain"/>
    <property type="match status" value="1"/>
</dbReference>
<dbReference type="Gene3D" id="3.30.300.70">
    <property type="entry name" value="RimP-like superfamily, N-terminal"/>
    <property type="match status" value="1"/>
</dbReference>
<dbReference type="HAMAP" id="MF_01077">
    <property type="entry name" value="RimP"/>
    <property type="match status" value="1"/>
</dbReference>
<dbReference type="InterPro" id="IPR003728">
    <property type="entry name" value="Ribosome_maturation_RimP"/>
</dbReference>
<dbReference type="InterPro" id="IPR028998">
    <property type="entry name" value="RimP_C"/>
</dbReference>
<dbReference type="InterPro" id="IPR036847">
    <property type="entry name" value="RimP_C_sf"/>
</dbReference>
<dbReference type="InterPro" id="IPR028989">
    <property type="entry name" value="RimP_N"/>
</dbReference>
<dbReference type="InterPro" id="IPR035956">
    <property type="entry name" value="RimP_N_sf"/>
</dbReference>
<dbReference type="NCBIfam" id="NF000928">
    <property type="entry name" value="PRK00092.1-2"/>
    <property type="match status" value="1"/>
</dbReference>
<dbReference type="PANTHER" id="PTHR33867">
    <property type="entry name" value="RIBOSOME MATURATION FACTOR RIMP"/>
    <property type="match status" value="1"/>
</dbReference>
<dbReference type="PANTHER" id="PTHR33867:SF1">
    <property type="entry name" value="RIBOSOME MATURATION FACTOR RIMP"/>
    <property type="match status" value="1"/>
</dbReference>
<dbReference type="Pfam" id="PF17384">
    <property type="entry name" value="DUF150_C"/>
    <property type="match status" value="1"/>
</dbReference>
<dbReference type="Pfam" id="PF02576">
    <property type="entry name" value="RimP_N"/>
    <property type="match status" value="1"/>
</dbReference>
<dbReference type="SUPFAM" id="SSF74942">
    <property type="entry name" value="YhbC-like, C-terminal domain"/>
    <property type="match status" value="1"/>
</dbReference>
<dbReference type="SUPFAM" id="SSF75420">
    <property type="entry name" value="YhbC-like, N-terminal domain"/>
    <property type="match status" value="1"/>
</dbReference>
<proteinExistence type="inferred from homology"/>
<organism>
    <name type="scientific">Desulforamulus reducens (strain ATCC BAA-1160 / DSM 100696 / MI-1)</name>
    <name type="common">Desulfotomaculum reducens</name>
    <dbReference type="NCBI Taxonomy" id="349161"/>
    <lineage>
        <taxon>Bacteria</taxon>
        <taxon>Bacillati</taxon>
        <taxon>Bacillota</taxon>
        <taxon>Clostridia</taxon>
        <taxon>Eubacteriales</taxon>
        <taxon>Peptococcaceae</taxon>
        <taxon>Desulforamulus</taxon>
    </lineage>
</organism>
<accession>A4J5X6</accession>
<keyword id="KW-0963">Cytoplasm</keyword>
<keyword id="KW-1185">Reference proteome</keyword>
<keyword id="KW-0690">Ribosome biogenesis</keyword>
<reference key="1">
    <citation type="submission" date="2007-03" db="EMBL/GenBank/DDBJ databases">
        <title>Complete sequence of Desulfotomaculum reducens MI-1.</title>
        <authorList>
            <consortium name="US DOE Joint Genome Institute"/>
            <person name="Copeland A."/>
            <person name="Lucas S."/>
            <person name="Lapidus A."/>
            <person name="Barry K."/>
            <person name="Detter J.C."/>
            <person name="Glavina del Rio T."/>
            <person name="Hammon N."/>
            <person name="Israni S."/>
            <person name="Dalin E."/>
            <person name="Tice H."/>
            <person name="Pitluck S."/>
            <person name="Sims D."/>
            <person name="Brettin T."/>
            <person name="Bruce D."/>
            <person name="Han C."/>
            <person name="Tapia R."/>
            <person name="Schmutz J."/>
            <person name="Larimer F."/>
            <person name="Land M."/>
            <person name="Hauser L."/>
            <person name="Kyrpides N."/>
            <person name="Kim E."/>
            <person name="Tebo B.M."/>
            <person name="Richardson P."/>
        </authorList>
    </citation>
    <scope>NUCLEOTIDE SEQUENCE [LARGE SCALE GENOMIC DNA]</scope>
    <source>
        <strain>ATCC BAA-1160 / DSM 100696 / MI-1</strain>
    </source>
</reference>
<evidence type="ECO:0000255" key="1">
    <source>
        <dbReference type="HAMAP-Rule" id="MF_01077"/>
    </source>
</evidence>
<name>RIMP_DESRM</name>
<comment type="function">
    <text evidence="1">Required for maturation of 30S ribosomal subunits.</text>
</comment>
<comment type="subcellular location">
    <subcellularLocation>
        <location evidence="1">Cytoplasm</location>
    </subcellularLocation>
</comment>
<comment type="similarity">
    <text evidence="1">Belongs to the RimP family.</text>
</comment>
<protein>
    <recommendedName>
        <fullName evidence="1">Ribosome maturation factor RimP</fullName>
    </recommendedName>
</protein>